<comment type="function">
    <text evidence="1">Guanidinium ion exporter. Couples guanidinium export to the proton motive force, exchanging one guanidinium ion for two protons.</text>
</comment>
<comment type="subcellular location">
    <subcellularLocation>
        <location evidence="3">Cell inner membrane</location>
        <topology evidence="3">Multi-pass membrane protein</topology>
    </subcellularLocation>
</comment>
<comment type="similarity">
    <text evidence="4">Belongs to the drug/metabolite transporter (DMT) superfamily. Small multidrug resistance (SMR) (TC 2.A.7.1) family. Gdx/SugE subfamily.</text>
</comment>
<name>GDX_CITFR</name>
<reference key="1">
    <citation type="journal article" date="1998" name="J. Mol. Biol.">
        <title>The entericidin locus of Escherichia coli and its implications for programmed bacterial cell death.</title>
        <authorList>
            <person name="Bishop R.E."/>
            <person name="Leskiw B.K."/>
            <person name="Hodges R.S."/>
            <person name="Kay C.M."/>
            <person name="Weiner J.H."/>
        </authorList>
    </citation>
    <scope>NUCLEOTIDE SEQUENCE [GENOMIC DNA]</scope>
    <source>
        <strain>OS60</strain>
    </source>
</reference>
<reference key="2">
    <citation type="journal article" date="2003" name="Biochem. Biophys. Res. Commun.">
        <title>Mutagenesis of SugE, a small multidrug resistance protein.</title>
        <authorList>
            <person name="Son M.S."/>
            <person name="Del Castilho C."/>
            <person name="Duncalf K.A."/>
            <person name="Carney D."/>
            <person name="Weiner J.H."/>
            <person name="Turner R.J."/>
        </authorList>
    </citation>
    <scope>TOPOLOGY</scope>
    <scope>SUBCELLULAR LOCATION</scope>
</reference>
<feature type="chain" id="PRO_0000108094" description="Guanidinium exporter">
    <location>
        <begin position="1"/>
        <end position="105"/>
    </location>
</feature>
<feature type="topological domain" description="Cytoplasmic" evidence="3">
    <location>
        <position position="1"/>
    </location>
</feature>
<feature type="transmembrane region" description="Helical" evidence="2">
    <location>
        <begin position="2"/>
        <end position="19"/>
    </location>
</feature>
<feature type="topological domain" description="Periplasmic" evidence="5">
    <location>
        <begin position="20"/>
        <end position="28"/>
    </location>
</feature>
<feature type="transmembrane region" description="Helical" evidence="2">
    <location>
        <begin position="29"/>
        <end position="48"/>
    </location>
</feature>
<feature type="topological domain" description="Cytoplasmic" evidence="5">
    <location>
        <begin position="49"/>
        <end position="54"/>
    </location>
</feature>
<feature type="transmembrane region" description="Helical" evidence="2">
    <location>
        <begin position="55"/>
        <end position="77"/>
    </location>
</feature>
<feature type="topological domain" description="Periplasmic" evidence="5">
    <location>
        <begin position="78"/>
        <end position="86"/>
    </location>
</feature>
<feature type="transmembrane region" description="Helical" evidence="2">
    <location>
        <begin position="87"/>
        <end position="104"/>
    </location>
</feature>
<feature type="topological domain" description="Cytoplasmic" evidence="3">
    <location>
        <position position="105"/>
    </location>
</feature>
<dbReference type="EMBL" id="U21727">
    <property type="protein sequence ID" value="AAC46457.1"/>
    <property type="molecule type" value="Genomic_DNA"/>
</dbReference>
<dbReference type="RefSeq" id="WP_000118520.1">
    <property type="nucleotide sequence ID" value="NZ_VWTQ01000005.1"/>
</dbReference>
<dbReference type="SMR" id="O69279"/>
<dbReference type="STRING" id="1333848.CFNIH1_08405"/>
<dbReference type="GeneID" id="93521401"/>
<dbReference type="OrthoDB" id="9808638at2"/>
<dbReference type="GO" id="GO:0005886">
    <property type="term" value="C:plasma membrane"/>
    <property type="evidence" value="ECO:0007669"/>
    <property type="project" value="UniProtKB-SubCell"/>
</dbReference>
<dbReference type="GO" id="GO:0022857">
    <property type="term" value="F:transmembrane transporter activity"/>
    <property type="evidence" value="ECO:0007669"/>
    <property type="project" value="InterPro"/>
</dbReference>
<dbReference type="GO" id="GO:0006811">
    <property type="term" value="P:monoatomic ion transport"/>
    <property type="evidence" value="ECO:0007669"/>
    <property type="project" value="UniProtKB-KW"/>
</dbReference>
<dbReference type="FunFam" id="1.10.3730.20:FF:000001">
    <property type="entry name" value="Quaternary ammonium compound resistance transporter SugE"/>
    <property type="match status" value="1"/>
</dbReference>
<dbReference type="Gene3D" id="1.10.3730.20">
    <property type="match status" value="1"/>
</dbReference>
<dbReference type="InterPro" id="IPR000390">
    <property type="entry name" value="Small_drug/metabolite_transptr"/>
</dbReference>
<dbReference type="InterPro" id="IPR045324">
    <property type="entry name" value="Small_multidrug_res"/>
</dbReference>
<dbReference type="NCBIfam" id="NF008512">
    <property type="entry name" value="PRK11431.1"/>
    <property type="match status" value="1"/>
</dbReference>
<dbReference type="PANTHER" id="PTHR30561:SF0">
    <property type="entry name" value="GUANIDINIUM EXPORTER"/>
    <property type="match status" value="1"/>
</dbReference>
<dbReference type="PANTHER" id="PTHR30561">
    <property type="entry name" value="SMR FAMILY PROTON-DEPENDENT DRUG EFFLUX TRANSPORTER SUGE"/>
    <property type="match status" value="1"/>
</dbReference>
<dbReference type="Pfam" id="PF00893">
    <property type="entry name" value="Multi_Drug_Res"/>
    <property type="match status" value="1"/>
</dbReference>
<dbReference type="SUPFAM" id="SSF103481">
    <property type="entry name" value="Multidrug resistance efflux transporter EmrE"/>
    <property type="match status" value="1"/>
</dbReference>
<sequence>MSWIVLLIAGLLEVVWAIGLKYTHGFTRLTPSIITIAAMIVSIAMLSWAMRTLPVGTAYAVWTGIGAVGAAITGILLLGESASPARLLSLGLIVAGIIGLKLSTH</sequence>
<proteinExistence type="evidence at protein level"/>
<keyword id="KW-0997">Cell inner membrane</keyword>
<keyword id="KW-1003">Cell membrane</keyword>
<keyword id="KW-0406">Ion transport</keyword>
<keyword id="KW-0472">Membrane</keyword>
<keyword id="KW-0812">Transmembrane</keyword>
<keyword id="KW-1133">Transmembrane helix</keyword>
<keyword id="KW-0813">Transport</keyword>
<evidence type="ECO:0000250" key="1">
    <source>
        <dbReference type="UniProtKB" id="P69937"/>
    </source>
</evidence>
<evidence type="ECO:0000255" key="2"/>
<evidence type="ECO:0000269" key="3">
    <source>
    </source>
</evidence>
<evidence type="ECO:0000305" key="4"/>
<evidence type="ECO:0000305" key="5">
    <source>
    </source>
</evidence>
<gene>
    <name evidence="1" type="primary">gdx</name>
    <name type="synonym">sugE</name>
</gene>
<organism>
    <name type="scientific">Citrobacter freundii</name>
    <dbReference type="NCBI Taxonomy" id="546"/>
    <lineage>
        <taxon>Bacteria</taxon>
        <taxon>Pseudomonadati</taxon>
        <taxon>Pseudomonadota</taxon>
        <taxon>Gammaproteobacteria</taxon>
        <taxon>Enterobacterales</taxon>
        <taxon>Enterobacteriaceae</taxon>
        <taxon>Citrobacter</taxon>
        <taxon>Citrobacter freundii complex</taxon>
    </lineage>
</organism>
<protein>
    <recommendedName>
        <fullName evidence="1">Guanidinium exporter</fullName>
    </recommendedName>
</protein>
<accession>O69279</accession>